<sequence>MAGSATVEKRLDFGLLGPLQMTIDGTPVPSGTPKQRAVLAMLVINRNRPVGVDALITALWEEWPPSGARASIHSYVSNLRKLLGGAGIDPRVVLAAAPPGYRLSIPDNTCDLGRFVAEKTAGVHAAAAGRFEQASRHLSAALREWRGPVLDDLRDFQFVEPFATALVEDKVLAHTAKAEAEIACGRASAVIAELEALTFEHPYREPLWTQLITAYYLSDRQSDALGAYRRVKTTLADDLGIDPGPTLRALNERILRQQPLDAKKSAKTTAAGTVTVLDQRTMASGQQAVAYLHDIASGRGYPLQAAATRIGRLHDNDIVLDSANVSRHHAVIVDTGTNYVINDLRSSNGVHVQHERIRSAVTLNDGDHIRICDHEFTFQISAGTHGGT</sequence>
<feature type="chain" id="PRO_0000428349" description="Transcriptional regulatory protein EmbR">
    <location>
        <begin position="1"/>
        <end position="388"/>
    </location>
</feature>
<feature type="domain" description="FHA" evidence="2">
    <location>
        <begin position="308"/>
        <end position="357"/>
    </location>
</feature>
<feature type="DNA-binding region" description="OmpR/PhoB-type" evidence="3">
    <location>
        <begin position="2"/>
        <end position="105"/>
    </location>
</feature>
<dbReference type="EMBL" id="AE000516">
    <property type="protein sequence ID" value="AAK45564.1"/>
    <property type="molecule type" value="Genomic_DNA"/>
</dbReference>
<dbReference type="PIR" id="C70754">
    <property type="entry name" value="C70754"/>
</dbReference>
<dbReference type="RefSeq" id="WP_003406553.1">
    <property type="nucleotide sequence ID" value="NZ_KK341227.1"/>
</dbReference>
<dbReference type="SMR" id="P9WGJ8"/>
<dbReference type="GeneID" id="45425239"/>
<dbReference type="KEGG" id="mtc:MT1305"/>
<dbReference type="PATRIC" id="fig|83331.31.peg.1410"/>
<dbReference type="HOGENOM" id="CLU_004665_0_3_11"/>
<dbReference type="Proteomes" id="UP000001020">
    <property type="component" value="Chromosome"/>
</dbReference>
<dbReference type="GO" id="GO:0003677">
    <property type="term" value="F:DNA binding"/>
    <property type="evidence" value="ECO:0007669"/>
    <property type="project" value="UniProtKB-KW"/>
</dbReference>
<dbReference type="GO" id="GO:0000160">
    <property type="term" value="P:phosphorelay signal transduction system"/>
    <property type="evidence" value="ECO:0007669"/>
    <property type="project" value="UniProtKB-KW"/>
</dbReference>
<dbReference type="GO" id="GO:0006355">
    <property type="term" value="P:regulation of DNA-templated transcription"/>
    <property type="evidence" value="ECO:0007669"/>
    <property type="project" value="InterPro"/>
</dbReference>
<dbReference type="CDD" id="cd15831">
    <property type="entry name" value="BTAD"/>
    <property type="match status" value="1"/>
</dbReference>
<dbReference type="CDD" id="cd00060">
    <property type="entry name" value="FHA"/>
    <property type="match status" value="1"/>
</dbReference>
<dbReference type="FunFam" id="1.25.40.10:FF:000222">
    <property type="entry name" value="SARP family transcriptional regulator"/>
    <property type="match status" value="1"/>
</dbReference>
<dbReference type="FunFam" id="2.60.200.20:FF:000055">
    <property type="entry name" value="Transcriptional regulator EmbR"/>
    <property type="match status" value="1"/>
</dbReference>
<dbReference type="FunFam" id="1.10.10.10:FF:000528">
    <property type="entry name" value="Transcriptional regulatory protein EmbR"/>
    <property type="match status" value="1"/>
</dbReference>
<dbReference type="Gene3D" id="2.60.200.20">
    <property type="match status" value="1"/>
</dbReference>
<dbReference type="Gene3D" id="1.25.40.10">
    <property type="entry name" value="Tetratricopeptide repeat domain"/>
    <property type="match status" value="1"/>
</dbReference>
<dbReference type="Gene3D" id="1.10.10.10">
    <property type="entry name" value="Winged helix-like DNA-binding domain superfamily/Winged helix DNA-binding domain"/>
    <property type="match status" value="1"/>
</dbReference>
<dbReference type="InterPro" id="IPR051677">
    <property type="entry name" value="AfsR-DnrI-RedD_regulator"/>
</dbReference>
<dbReference type="InterPro" id="IPR005158">
    <property type="entry name" value="BTAD"/>
</dbReference>
<dbReference type="InterPro" id="IPR000253">
    <property type="entry name" value="FHA_dom"/>
</dbReference>
<dbReference type="InterPro" id="IPR001867">
    <property type="entry name" value="OmpR/PhoB-type_DNA-bd"/>
</dbReference>
<dbReference type="InterPro" id="IPR016032">
    <property type="entry name" value="Sig_transdc_resp-reg_C-effctor"/>
</dbReference>
<dbReference type="InterPro" id="IPR008984">
    <property type="entry name" value="SMAD_FHA_dom_sf"/>
</dbReference>
<dbReference type="InterPro" id="IPR011990">
    <property type="entry name" value="TPR-like_helical_dom_sf"/>
</dbReference>
<dbReference type="InterPro" id="IPR036388">
    <property type="entry name" value="WH-like_DNA-bd_sf"/>
</dbReference>
<dbReference type="PANTHER" id="PTHR35807:SF1">
    <property type="entry name" value="TRANSCRIPTIONAL REGULATOR REDD"/>
    <property type="match status" value="1"/>
</dbReference>
<dbReference type="PANTHER" id="PTHR35807">
    <property type="entry name" value="TRANSCRIPTIONAL REGULATOR REDD-RELATED"/>
    <property type="match status" value="1"/>
</dbReference>
<dbReference type="Pfam" id="PF03704">
    <property type="entry name" value="BTAD"/>
    <property type="match status" value="1"/>
</dbReference>
<dbReference type="Pfam" id="PF00498">
    <property type="entry name" value="FHA"/>
    <property type="match status" value="1"/>
</dbReference>
<dbReference type="Pfam" id="PF00486">
    <property type="entry name" value="Trans_reg_C"/>
    <property type="match status" value="1"/>
</dbReference>
<dbReference type="SMART" id="SM01043">
    <property type="entry name" value="BTAD"/>
    <property type="match status" value="1"/>
</dbReference>
<dbReference type="SMART" id="SM00240">
    <property type="entry name" value="FHA"/>
    <property type="match status" value="1"/>
</dbReference>
<dbReference type="SMART" id="SM00862">
    <property type="entry name" value="Trans_reg_C"/>
    <property type="match status" value="1"/>
</dbReference>
<dbReference type="SUPFAM" id="SSF46894">
    <property type="entry name" value="C-terminal effector domain of the bipartite response regulators"/>
    <property type="match status" value="1"/>
</dbReference>
<dbReference type="SUPFAM" id="SSF49879">
    <property type="entry name" value="SMAD/FHA domain"/>
    <property type="match status" value="1"/>
</dbReference>
<dbReference type="SUPFAM" id="SSF48452">
    <property type="entry name" value="TPR-like"/>
    <property type="match status" value="1"/>
</dbReference>
<dbReference type="PROSITE" id="PS50006">
    <property type="entry name" value="FHA_DOMAIN"/>
    <property type="match status" value="1"/>
</dbReference>
<dbReference type="PROSITE" id="PS51755">
    <property type="entry name" value="OMPR_PHOB"/>
    <property type="match status" value="1"/>
</dbReference>
<comment type="function">
    <text evidence="1">Positively regulates the transcription of the embCAB operon. Exhibits ATPase and GTPase activities (By similarity).</text>
</comment>
<comment type="subunit">
    <text evidence="1">Interacts with RNA polymerase.</text>
</comment>
<comment type="PTM">
    <text evidence="1">Phosphorylated on threonine residue(s) by PknH, PknA and PknB. Phosphorylation enhances the DNA-binding activity of EmbR. Dephosphorylated by PstP (By similarity).</text>
</comment>
<comment type="similarity">
    <text evidence="4">Belongs to the AfsR/DnrI/RedD regulatory family.</text>
</comment>
<evidence type="ECO:0000250" key="1"/>
<evidence type="ECO:0000255" key="2">
    <source>
        <dbReference type="PROSITE-ProRule" id="PRU00086"/>
    </source>
</evidence>
<evidence type="ECO:0000255" key="3">
    <source>
        <dbReference type="PROSITE-ProRule" id="PRU01091"/>
    </source>
</evidence>
<evidence type="ECO:0000305" key="4"/>
<organism>
    <name type="scientific">Mycobacterium tuberculosis (strain CDC 1551 / Oshkosh)</name>
    <dbReference type="NCBI Taxonomy" id="83331"/>
    <lineage>
        <taxon>Bacteria</taxon>
        <taxon>Bacillati</taxon>
        <taxon>Actinomycetota</taxon>
        <taxon>Actinomycetes</taxon>
        <taxon>Mycobacteriales</taxon>
        <taxon>Mycobacteriaceae</taxon>
        <taxon>Mycobacterium</taxon>
        <taxon>Mycobacterium tuberculosis complex</taxon>
    </lineage>
</organism>
<name>EMBR_MYCTO</name>
<accession>P9WGJ8</accession>
<accession>L0T949</accession>
<accession>P66799</accession>
<accession>Q11052</accession>
<protein>
    <recommendedName>
        <fullName>Transcriptional regulatory protein EmbR</fullName>
    </recommendedName>
</protein>
<reference key="1">
    <citation type="journal article" date="2002" name="J. Bacteriol.">
        <title>Whole-genome comparison of Mycobacterium tuberculosis clinical and laboratory strains.</title>
        <authorList>
            <person name="Fleischmann R.D."/>
            <person name="Alland D."/>
            <person name="Eisen J.A."/>
            <person name="Carpenter L."/>
            <person name="White O."/>
            <person name="Peterson J.D."/>
            <person name="DeBoy R.T."/>
            <person name="Dodson R.J."/>
            <person name="Gwinn M.L."/>
            <person name="Haft D.H."/>
            <person name="Hickey E.K."/>
            <person name="Kolonay J.F."/>
            <person name="Nelson W.C."/>
            <person name="Umayam L.A."/>
            <person name="Ermolaeva M.D."/>
            <person name="Salzberg S.L."/>
            <person name="Delcher A."/>
            <person name="Utterback T.R."/>
            <person name="Weidman J.F."/>
            <person name="Khouri H.M."/>
            <person name="Gill J."/>
            <person name="Mikula A."/>
            <person name="Bishai W."/>
            <person name="Jacobs W.R. Jr."/>
            <person name="Venter J.C."/>
            <person name="Fraser C.M."/>
        </authorList>
    </citation>
    <scope>NUCLEOTIDE SEQUENCE [LARGE SCALE GENOMIC DNA]</scope>
    <source>
        <strain>CDC 1551 / Oshkosh</strain>
    </source>
</reference>
<proteinExistence type="inferred from homology"/>
<keyword id="KW-0238">DNA-binding</keyword>
<keyword id="KW-0597">Phosphoprotein</keyword>
<keyword id="KW-1185">Reference proteome</keyword>
<keyword id="KW-0804">Transcription</keyword>
<keyword id="KW-0805">Transcription regulation</keyword>
<keyword id="KW-0902">Two-component regulatory system</keyword>
<gene>
    <name type="primary">embR</name>
    <name type="ordered locus">MT1305</name>
</gene>